<feature type="signal peptide">
    <location>
        <begin position="1"/>
        <end position="23"/>
    </location>
</feature>
<feature type="chain" id="PRO_0000002930" description="Laccase-2">
    <location>
        <begin position="24"/>
        <end position="533"/>
    </location>
</feature>
<feature type="domain" description="Plastocyanin-like 1">
    <location>
        <begin position="25"/>
        <end position="171"/>
    </location>
</feature>
<feature type="domain" description="Plastocyanin-like 2">
    <location>
        <begin position="173"/>
        <end position="336"/>
    </location>
</feature>
<feature type="domain" description="Plastocyanin-like 3">
    <location>
        <begin position="382"/>
        <end position="501"/>
    </location>
</feature>
<feature type="binding site" description="type 2 copper site" evidence="1">
    <location>
        <position position="98"/>
    </location>
    <ligand>
        <name>Cu cation</name>
        <dbReference type="ChEBI" id="CHEBI:23378"/>
        <label>1</label>
    </ligand>
</feature>
<feature type="binding site" description="type 3 copper site" evidence="1">
    <location>
        <position position="100"/>
    </location>
    <ligand>
        <name>Cu cation</name>
        <dbReference type="ChEBI" id="CHEBI:23378"/>
        <label>2</label>
    </ligand>
</feature>
<feature type="binding site" description="type 3 copper site" evidence="1">
    <location>
        <position position="143"/>
    </location>
    <ligand>
        <name>Cu cation</name>
        <dbReference type="ChEBI" id="CHEBI:23378"/>
        <label>2</label>
    </ligand>
</feature>
<feature type="binding site" description="type 3 copper site" evidence="1">
    <location>
        <position position="145"/>
    </location>
    <ligand>
        <name>Cu cation</name>
        <dbReference type="ChEBI" id="CHEBI:23378"/>
        <label>3</label>
    </ligand>
</feature>
<feature type="binding site" description="type 1 copper site" evidence="1">
    <location>
        <position position="427"/>
    </location>
    <ligand>
        <name>Cu cation</name>
        <dbReference type="ChEBI" id="CHEBI:23378"/>
        <label>4</label>
    </ligand>
</feature>
<feature type="binding site" description="type 2 copper site" evidence="1">
    <location>
        <position position="430"/>
    </location>
    <ligand>
        <name>Cu cation</name>
        <dbReference type="ChEBI" id="CHEBI:23378"/>
        <label>1</label>
    </ligand>
</feature>
<feature type="binding site" description="type 3 copper site" evidence="1">
    <location>
        <position position="432"/>
    </location>
    <ligand>
        <name>Cu cation</name>
        <dbReference type="ChEBI" id="CHEBI:23378"/>
        <label>3</label>
    </ligand>
</feature>
<feature type="binding site" description="type 3 copper site" evidence="1">
    <location>
        <position position="483"/>
    </location>
    <ligand>
        <name>Cu cation</name>
        <dbReference type="ChEBI" id="CHEBI:23378"/>
        <label>3</label>
    </ligand>
</feature>
<feature type="binding site" description="type 1 copper site" evidence="1">
    <location>
        <position position="484"/>
    </location>
    <ligand>
        <name>Cu cation</name>
        <dbReference type="ChEBI" id="CHEBI:23378"/>
        <label>4</label>
    </ligand>
</feature>
<feature type="binding site" description="type 3 copper site" evidence="1">
    <location>
        <position position="485"/>
    </location>
    <ligand>
        <name>Cu cation</name>
        <dbReference type="ChEBI" id="CHEBI:23378"/>
        <label>2</label>
    </ligand>
</feature>
<feature type="binding site" description="type 1 copper site" evidence="1">
    <location>
        <position position="489"/>
    </location>
    <ligand>
        <name>Cu cation</name>
        <dbReference type="ChEBI" id="CHEBI:23378"/>
        <label>4</label>
    </ligand>
</feature>
<feature type="glycosylation site" description="N-linked (GlcNAc...) (high mannose) asparagine" evidence="3">
    <location>
        <position position="467"/>
    </location>
</feature>
<feature type="disulfide bond" evidence="2">
    <location>
        <begin position="119"/>
        <end position="516"/>
    </location>
</feature>
<feature type="disulfide bond" evidence="1">
    <location>
        <begin position="151"/>
        <end position="238"/>
    </location>
</feature>
<dbReference type="EC" id="1.10.3.2" evidence="2"/>
<dbReference type="EMBL" id="Z49075">
    <property type="protein sequence ID" value="CAA88895.1"/>
    <property type="molecule type" value="Genomic_DNA"/>
</dbReference>
<dbReference type="EMBL" id="Z34848">
    <property type="protein sequence ID" value="CAA84357.1"/>
    <property type="molecule type" value="mRNA"/>
</dbReference>
<dbReference type="PIR" id="S62371">
    <property type="entry name" value="S62371"/>
</dbReference>
<dbReference type="SMR" id="Q12739"/>
<dbReference type="CAZy" id="AA1">
    <property type="family name" value="Auxiliary Activities 1"/>
</dbReference>
<dbReference type="GlyCosmos" id="Q12739">
    <property type="glycosylation" value="1 site, No reported glycans"/>
</dbReference>
<dbReference type="iPTMnet" id="Q12739"/>
<dbReference type="VEuPathDB" id="FungiDB:PC9H_006956"/>
<dbReference type="VEuPathDB" id="FungiDB:PLEOSDRAFT_1089723"/>
<dbReference type="OrthoDB" id="2121828at2759"/>
<dbReference type="BRENDA" id="1.10.3.2">
    <property type="organism ID" value="4912"/>
</dbReference>
<dbReference type="SABIO-RK" id="Q12739"/>
<dbReference type="GO" id="GO:0005576">
    <property type="term" value="C:extracellular region"/>
    <property type="evidence" value="ECO:0007669"/>
    <property type="project" value="UniProtKB-SubCell"/>
</dbReference>
<dbReference type="GO" id="GO:0005507">
    <property type="term" value="F:copper ion binding"/>
    <property type="evidence" value="ECO:0007669"/>
    <property type="project" value="InterPro"/>
</dbReference>
<dbReference type="GO" id="GO:0052716">
    <property type="term" value="F:hydroquinone:oxygen oxidoreductase activity"/>
    <property type="evidence" value="ECO:0007669"/>
    <property type="project" value="UniProtKB-EC"/>
</dbReference>
<dbReference type="GO" id="GO:0046274">
    <property type="term" value="P:lignin catabolic process"/>
    <property type="evidence" value="ECO:0007669"/>
    <property type="project" value="UniProtKB-KW"/>
</dbReference>
<dbReference type="CDD" id="cd13903">
    <property type="entry name" value="CuRO_3_Tv-LCC_like"/>
    <property type="match status" value="1"/>
</dbReference>
<dbReference type="FunFam" id="2.60.40.420:FF:000045">
    <property type="entry name" value="Laccase 2"/>
    <property type="match status" value="1"/>
</dbReference>
<dbReference type="FunFam" id="2.60.40.420:FF:000112">
    <property type="entry name" value="Laccase B"/>
    <property type="match status" value="1"/>
</dbReference>
<dbReference type="Gene3D" id="2.60.40.420">
    <property type="entry name" value="Cupredoxins - blue copper proteins"/>
    <property type="match status" value="3"/>
</dbReference>
<dbReference type="InterPro" id="IPR011707">
    <property type="entry name" value="Cu-oxidase-like_N"/>
</dbReference>
<dbReference type="InterPro" id="IPR001117">
    <property type="entry name" value="Cu-oxidase_2nd"/>
</dbReference>
<dbReference type="InterPro" id="IPR011706">
    <property type="entry name" value="Cu-oxidase_C"/>
</dbReference>
<dbReference type="InterPro" id="IPR045087">
    <property type="entry name" value="Cu-oxidase_fam"/>
</dbReference>
<dbReference type="InterPro" id="IPR033138">
    <property type="entry name" value="Cu_oxidase_CS"/>
</dbReference>
<dbReference type="InterPro" id="IPR002355">
    <property type="entry name" value="Cu_oxidase_Cu_BS"/>
</dbReference>
<dbReference type="InterPro" id="IPR008972">
    <property type="entry name" value="Cupredoxin"/>
</dbReference>
<dbReference type="PANTHER" id="PTHR11709:SF511">
    <property type="entry name" value="LACCASE"/>
    <property type="match status" value="1"/>
</dbReference>
<dbReference type="PANTHER" id="PTHR11709">
    <property type="entry name" value="MULTI-COPPER OXIDASE"/>
    <property type="match status" value="1"/>
</dbReference>
<dbReference type="Pfam" id="PF00394">
    <property type="entry name" value="Cu-oxidase"/>
    <property type="match status" value="1"/>
</dbReference>
<dbReference type="Pfam" id="PF07731">
    <property type="entry name" value="Cu-oxidase_2"/>
    <property type="match status" value="1"/>
</dbReference>
<dbReference type="Pfam" id="PF07732">
    <property type="entry name" value="Cu-oxidase_3"/>
    <property type="match status" value="1"/>
</dbReference>
<dbReference type="SUPFAM" id="SSF49503">
    <property type="entry name" value="Cupredoxins"/>
    <property type="match status" value="3"/>
</dbReference>
<dbReference type="PROSITE" id="PS00079">
    <property type="entry name" value="MULTICOPPER_OXIDASE1"/>
    <property type="match status" value="2"/>
</dbReference>
<dbReference type="PROSITE" id="PS00080">
    <property type="entry name" value="MULTICOPPER_OXIDASE2"/>
    <property type="match status" value="1"/>
</dbReference>
<name>LAC2_PLEOS</name>
<protein>
    <recommendedName>
        <fullName>Laccase-2</fullName>
        <ecNumber evidence="2">1.10.3.2</ecNumber>
    </recommendedName>
    <alternativeName>
        <fullName>Benzenediol:oxygen oxidoreductase 2</fullName>
    </alternativeName>
    <alternativeName>
        <fullName>Diphenol oxidase 2</fullName>
    </alternativeName>
    <alternativeName>
        <fullName>Urishiol oxidase 2</fullName>
    </alternativeName>
</protein>
<organism>
    <name type="scientific">Pleurotus ostreatus</name>
    <name type="common">Oyster mushroom</name>
    <name type="synonym">White-rot fungus</name>
    <dbReference type="NCBI Taxonomy" id="5322"/>
    <lineage>
        <taxon>Eukaryota</taxon>
        <taxon>Fungi</taxon>
        <taxon>Dikarya</taxon>
        <taxon>Basidiomycota</taxon>
        <taxon>Agaricomycotina</taxon>
        <taxon>Agaricomycetes</taxon>
        <taxon>Agaricomycetidae</taxon>
        <taxon>Agaricales</taxon>
        <taxon>Pleurotineae</taxon>
        <taxon>Pleurotaceae</taxon>
        <taxon>Pleurotus</taxon>
    </lineage>
</organism>
<accession>Q12739</accession>
<keyword id="KW-0186">Copper</keyword>
<keyword id="KW-1015">Disulfide bond</keyword>
<keyword id="KW-0325">Glycoprotein</keyword>
<keyword id="KW-0439">Lignin degradation</keyword>
<keyword id="KW-0479">Metal-binding</keyword>
<keyword id="KW-0560">Oxidoreductase</keyword>
<keyword id="KW-0677">Repeat</keyword>
<keyword id="KW-0964">Secreted</keyword>
<keyword id="KW-0732">Signal</keyword>
<proteinExistence type="evidence at protein level"/>
<sequence>MFPGARILATLTLALHLLHGAHAAIGPAGNMYIVNEDVSPDGFARSAVVARSVPATDPTPATASIPGVLVQGNKGDNFQLNVVNQLSDTTMLKTTSIHWHGFFQAGSSWADGPAFVTQCPVASGDSFLYNFNVPDQAGTFWYHSHLSTQYCDGLRGPFVVYDPSDPHLSLYDIDNADTVITLEDWYHIVAPQNAAIPTPDSTLINGKGRYAGGPTSPLAIINVESNKRYRFRLVSMSCDPNFTFSIDGHSLLVIEADAVNIVPITVDSIQIFAGQRYSFVLTANQAVDNYWIRANPNLGSTGFVGGINSAILRYAGATEDDPTTTSSTSTPLLETNLVPLENPGAPGPPVPGGADININLAMAFDFTTFELTINGVPFLPPTAPVLLQILSGASTAASLLPSGSIYELEANKVVEISMPALAVGGPHPFHLHGHTFDVIRSAGSTTYNFDTPARRDVVNTGTGANDNVTIRFVTDNPGPWFLHCHIDWHLEIGLAVVFAEDVTSISAPPAAWDDLCPIYNALSDNDKGGIVPS</sequence>
<comment type="function">
    <text evidence="2">Lignin degradation and detoxification of lignin-derived products.</text>
</comment>
<comment type="catalytic activity">
    <reaction evidence="2">
        <text>4 hydroquinone + O2 = 4 benzosemiquinone + 2 H2O</text>
        <dbReference type="Rhea" id="RHEA:11276"/>
        <dbReference type="ChEBI" id="CHEBI:15377"/>
        <dbReference type="ChEBI" id="CHEBI:15379"/>
        <dbReference type="ChEBI" id="CHEBI:17594"/>
        <dbReference type="ChEBI" id="CHEBI:17977"/>
        <dbReference type="EC" id="1.10.3.2"/>
    </reaction>
</comment>
<comment type="cofactor">
    <cofactor evidence="2">
        <name>Cu cation</name>
        <dbReference type="ChEBI" id="CHEBI:23378"/>
    </cofactor>
    <text evidence="2">Binds 4 Cu cations per monomer.</text>
</comment>
<comment type="subcellular location">
    <subcellularLocation>
        <location evidence="2">Secreted</location>
    </subcellularLocation>
</comment>
<comment type="PTM">
    <text evidence="3">N-glycosylated at Asn-467; contains a high-mannose glycan with a varying number of mannose residues.</text>
</comment>
<comment type="miscellaneous">
    <text>POX2 isozyme is the most abundant laccase of P.ostreatus under various growth conditions.</text>
</comment>
<comment type="similarity">
    <text evidence="4">Belongs to the multicopper oxidase family.</text>
</comment>
<reference key="1">
    <citation type="journal article" date="1996" name="Eur. J. Biochem.">
        <title>The gene, protein and glycan structures of laccase from Pleurotus ostreatus.</title>
        <authorList>
            <person name="Giardina P."/>
            <person name="Aurilia V."/>
            <person name="Cannio R."/>
            <person name="Marzullo L."/>
            <person name="Amoresano A."/>
            <person name="Siciliano R."/>
            <person name="Pucci P."/>
            <person name="Sannia G."/>
        </authorList>
    </citation>
    <scope>NUCLEOTIDE SEQUENCE [GENOMIC DNA / MRNA]</scope>
    <scope>GLYCOSYLATION AT ASN-467</scope>
    <scope>IDENTIFICATION BY MASS SPECTROMETRY</scope>
    <source>
        <tissue>Mycelium</tissue>
    </source>
</reference>
<reference key="2">
    <citation type="journal article" date="1993" name="Appl. Microbiol. Biotechnol.">
        <title>Stability and activity of a phenol oxidase from the ligninolytic fungus Pleurotus ostreatus.</title>
        <authorList>
            <person name="Palmieri G."/>
            <person name="Giardina P."/>
            <person name="Marzullo L."/>
            <person name="Desiderio B."/>
            <person name="Nitti G."/>
            <person name="Cannio R."/>
            <person name="Sannia G."/>
        </authorList>
    </citation>
    <scope>CHARACTERIZATION</scope>
    <source>
        <strain>Florida</strain>
        <tissue>Mycelium</tissue>
    </source>
</reference>
<gene>
    <name type="primary">POX2</name>
</gene>
<evidence type="ECO:0000250" key="1">
    <source>
        <dbReference type="UniProtKB" id="D0VWU3"/>
    </source>
</evidence>
<evidence type="ECO:0000250" key="2">
    <source>
        <dbReference type="UniProtKB" id="Q70KY3"/>
    </source>
</evidence>
<evidence type="ECO:0000269" key="3">
    <source>
    </source>
</evidence>
<evidence type="ECO:0000305" key="4"/>